<sequence length="261" mass="28084">MSKQPHILVSNDDGYLAPGLLALVNAVRPLGRITVIAPEQNHSGASNSLTLSRPLSIHRVAGGERDGFFFVNGTPTDCVHVAMTGFLDEKPDLVISGINQGENMGEDTLYSGTVAAAVEGVMFGVPGIAFSQIDRGWNRIEDAAKAAHDVVAQMLVSALARTEGTATLLNVNIPNRPYADLYRWRVTRLGNRHHSQPVVVQDSPRGEKIYWIGAAGEVKEGSEGTDFHAIAEGCISITPMQLDLTHHARLAAMRANGWDRG</sequence>
<organism>
    <name type="scientific">Polynucleobacter asymbioticus (strain DSM 18221 / CIP 109841 / QLW-P1DMWA-1)</name>
    <name type="common">Polynucleobacter necessarius subsp. asymbioticus</name>
    <dbReference type="NCBI Taxonomy" id="312153"/>
    <lineage>
        <taxon>Bacteria</taxon>
        <taxon>Pseudomonadati</taxon>
        <taxon>Pseudomonadota</taxon>
        <taxon>Betaproteobacteria</taxon>
        <taxon>Burkholderiales</taxon>
        <taxon>Burkholderiaceae</taxon>
        <taxon>Polynucleobacter</taxon>
    </lineage>
</organism>
<comment type="function">
    <text evidence="1">Nucleotidase that shows phosphatase activity on nucleoside 5'-monophosphates.</text>
</comment>
<comment type="catalytic activity">
    <reaction evidence="1">
        <text>a ribonucleoside 5'-phosphate + H2O = a ribonucleoside + phosphate</text>
        <dbReference type="Rhea" id="RHEA:12484"/>
        <dbReference type="ChEBI" id="CHEBI:15377"/>
        <dbReference type="ChEBI" id="CHEBI:18254"/>
        <dbReference type="ChEBI" id="CHEBI:43474"/>
        <dbReference type="ChEBI" id="CHEBI:58043"/>
        <dbReference type="EC" id="3.1.3.5"/>
    </reaction>
</comment>
<comment type="cofactor">
    <cofactor evidence="1">
        <name>a divalent metal cation</name>
        <dbReference type="ChEBI" id="CHEBI:60240"/>
    </cofactor>
    <text evidence="1">Binds 1 divalent metal cation per subunit.</text>
</comment>
<comment type="subcellular location">
    <subcellularLocation>
        <location evidence="1">Cytoplasm</location>
    </subcellularLocation>
</comment>
<comment type="similarity">
    <text evidence="1">Belongs to the SurE nucleotidase family.</text>
</comment>
<keyword id="KW-0963">Cytoplasm</keyword>
<keyword id="KW-0378">Hydrolase</keyword>
<keyword id="KW-0479">Metal-binding</keyword>
<keyword id="KW-0547">Nucleotide-binding</keyword>
<keyword id="KW-1185">Reference proteome</keyword>
<name>SURE_POLAQ</name>
<proteinExistence type="inferred from homology"/>
<reference key="1">
    <citation type="journal article" date="2012" name="Stand. Genomic Sci.">
        <title>Complete genome sequence of Polynucleobacter necessarius subsp. asymbioticus type strain (QLW-P1DMWA-1(T)).</title>
        <authorList>
            <person name="Meincke L."/>
            <person name="Copeland A."/>
            <person name="Lapidus A."/>
            <person name="Lucas S."/>
            <person name="Berry K.W."/>
            <person name="Del Rio T.G."/>
            <person name="Hammon N."/>
            <person name="Dalin E."/>
            <person name="Tice H."/>
            <person name="Pitluck S."/>
            <person name="Richardson P."/>
            <person name="Bruce D."/>
            <person name="Goodwin L."/>
            <person name="Han C."/>
            <person name="Tapia R."/>
            <person name="Detter J.C."/>
            <person name="Schmutz J."/>
            <person name="Brettin T."/>
            <person name="Larimer F."/>
            <person name="Land M."/>
            <person name="Hauser L."/>
            <person name="Kyrpides N.C."/>
            <person name="Ivanova N."/>
            <person name="Goker M."/>
            <person name="Woyke T."/>
            <person name="Wu Q.L."/>
            <person name="Pockl M."/>
            <person name="Hahn M.W."/>
            <person name="Klenk H.P."/>
        </authorList>
    </citation>
    <scope>NUCLEOTIDE SEQUENCE [LARGE SCALE GENOMIC DNA]</scope>
    <source>
        <strain>DSM 18221 / CIP 109841 / QLW-P1DMWA-1</strain>
    </source>
</reference>
<gene>
    <name evidence="1" type="primary">surE</name>
    <name type="ordered locus">Pnuc_1299</name>
</gene>
<evidence type="ECO:0000255" key="1">
    <source>
        <dbReference type="HAMAP-Rule" id="MF_00060"/>
    </source>
</evidence>
<protein>
    <recommendedName>
        <fullName evidence="1">5'-nucleotidase SurE</fullName>
        <ecNumber evidence="1">3.1.3.5</ecNumber>
    </recommendedName>
    <alternativeName>
        <fullName evidence="1">Nucleoside 5'-monophosphate phosphohydrolase</fullName>
    </alternativeName>
</protein>
<feature type="chain" id="PRO_0000335267" description="5'-nucleotidase SurE">
    <location>
        <begin position="1"/>
        <end position="261"/>
    </location>
</feature>
<feature type="binding site" evidence="1">
    <location>
        <position position="12"/>
    </location>
    <ligand>
        <name>a divalent metal cation</name>
        <dbReference type="ChEBI" id="CHEBI:60240"/>
    </ligand>
</feature>
<feature type="binding site" evidence="1">
    <location>
        <position position="13"/>
    </location>
    <ligand>
        <name>a divalent metal cation</name>
        <dbReference type="ChEBI" id="CHEBI:60240"/>
    </ligand>
</feature>
<feature type="binding site" evidence="1">
    <location>
        <position position="43"/>
    </location>
    <ligand>
        <name>a divalent metal cation</name>
        <dbReference type="ChEBI" id="CHEBI:60240"/>
    </ligand>
</feature>
<feature type="binding site" evidence="1">
    <location>
        <position position="99"/>
    </location>
    <ligand>
        <name>a divalent metal cation</name>
        <dbReference type="ChEBI" id="CHEBI:60240"/>
    </ligand>
</feature>
<accession>A4SYE9</accession>
<dbReference type="EC" id="3.1.3.5" evidence="1"/>
<dbReference type="EMBL" id="CP000655">
    <property type="protein sequence ID" value="ABP34513.1"/>
    <property type="molecule type" value="Genomic_DNA"/>
</dbReference>
<dbReference type="RefSeq" id="WP_011903138.1">
    <property type="nucleotide sequence ID" value="NC_009379.1"/>
</dbReference>
<dbReference type="SMR" id="A4SYE9"/>
<dbReference type="GeneID" id="31481687"/>
<dbReference type="KEGG" id="pnu:Pnuc_1299"/>
<dbReference type="eggNOG" id="COG0496">
    <property type="taxonomic scope" value="Bacteria"/>
</dbReference>
<dbReference type="HOGENOM" id="CLU_045192_1_2_4"/>
<dbReference type="Proteomes" id="UP000000231">
    <property type="component" value="Chromosome"/>
</dbReference>
<dbReference type="GO" id="GO:0005737">
    <property type="term" value="C:cytoplasm"/>
    <property type="evidence" value="ECO:0007669"/>
    <property type="project" value="UniProtKB-SubCell"/>
</dbReference>
<dbReference type="GO" id="GO:0008254">
    <property type="term" value="F:3'-nucleotidase activity"/>
    <property type="evidence" value="ECO:0007669"/>
    <property type="project" value="TreeGrafter"/>
</dbReference>
<dbReference type="GO" id="GO:0008253">
    <property type="term" value="F:5'-nucleotidase activity"/>
    <property type="evidence" value="ECO:0007669"/>
    <property type="project" value="UniProtKB-UniRule"/>
</dbReference>
<dbReference type="GO" id="GO:0004309">
    <property type="term" value="F:exopolyphosphatase activity"/>
    <property type="evidence" value="ECO:0007669"/>
    <property type="project" value="TreeGrafter"/>
</dbReference>
<dbReference type="GO" id="GO:0046872">
    <property type="term" value="F:metal ion binding"/>
    <property type="evidence" value="ECO:0007669"/>
    <property type="project" value="UniProtKB-UniRule"/>
</dbReference>
<dbReference type="GO" id="GO:0000166">
    <property type="term" value="F:nucleotide binding"/>
    <property type="evidence" value="ECO:0007669"/>
    <property type="project" value="UniProtKB-KW"/>
</dbReference>
<dbReference type="FunFam" id="3.40.1210.10:FF:000001">
    <property type="entry name" value="5'/3'-nucleotidase SurE"/>
    <property type="match status" value="1"/>
</dbReference>
<dbReference type="Gene3D" id="3.40.1210.10">
    <property type="entry name" value="Survival protein SurE-like phosphatase/nucleotidase"/>
    <property type="match status" value="1"/>
</dbReference>
<dbReference type="HAMAP" id="MF_00060">
    <property type="entry name" value="SurE"/>
    <property type="match status" value="1"/>
</dbReference>
<dbReference type="InterPro" id="IPR030048">
    <property type="entry name" value="SurE"/>
</dbReference>
<dbReference type="InterPro" id="IPR002828">
    <property type="entry name" value="SurE-like_Pase/nucleotidase"/>
</dbReference>
<dbReference type="InterPro" id="IPR036523">
    <property type="entry name" value="SurE-like_sf"/>
</dbReference>
<dbReference type="NCBIfam" id="NF001489">
    <property type="entry name" value="PRK00346.1-3"/>
    <property type="match status" value="1"/>
</dbReference>
<dbReference type="NCBIfam" id="NF001490">
    <property type="entry name" value="PRK00346.1-4"/>
    <property type="match status" value="1"/>
</dbReference>
<dbReference type="NCBIfam" id="TIGR00087">
    <property type="entry name" value="surE"/>
    <property type="match status" value="1"/>
</dbReference>
<dbReference type="PANTHER" id="PTHR30457">
    <property type="entry name" value="5'-NUCLEOTIDASE SURE"/>
    <property type="match status" value="1"/>
</dbReference>
<dbReference type="PANTHER" id="PTHR30457:SF12">
    <property type="entry name" value="5'_3'-NUCLEOTIDASE SURE"/>
    <property type="match status" value="1"/>
</dbReference>
<dbReference type="Pfam" id="PF01975">
    <property type="entry name" value="SurE"/>
    <property type="match status" value="1"/>
</dbReference>
<dbReference type="SUPFAM" id="SSF64167">
    <property type="entry name" value="SurE-like"/>
    <property type="match status" value="1"/>
</dbReference>